<feature type="chain" id="PRO_1000092061" description="4-diphosphocytidyl-2-C-methyl-D-erythritol kinase">
    <location>
        <begin position="1"/>
        <end position="267"/>
    </location>
</feature>
<feature type="active site" evidence="1">
    <location>
        <position position="8"/>
    </location>
</feature>
<feature type="active site" evidence="1">
    <location>
        <position position="132"/>
    </location>
</feature>
<feature type="binding site" evidence="1">
    <location>
        <begin position="90"/>
        <end position="100"/>
    </location>
    <ligand>
        <name>ATP</name>
        <dbReference type="ChEBI" id="CHEBI:30616"/>
    </ligand>
</feature>
<comment type="function">
    <text evidence="1">Catalyzes the phosphorylation of the position 2 hydroxy group of 4-diphosphocytidyl-2C-methyl-D-erythritol.</text>
</comment>
<comment type="catalytic activity">
    <reaction evidence="1">
        <text>4-CDP-2-C-methyl-D-erythritol + ATP = 4-CDP-2-C-methyl-D-erythritol 2-phosphate + ADP + H(+)</text>
        <dbReference type="Rhea" id="RHEA:18437"/>
        <dbReference type="ChEBI" id="CHEBI:15378"/>
        <dbReference type="ChEBI" id="CHEBI:30616"/>
        <dbReference type="ChEBI" id="CHEBI:57823"/>
        <dbReference type="ChEBI" id="CHEBI:57919"/>
        <dbReference type="ChEBI" id="CHEBI:456216"/>
        <dbReference type="EC" id="2.7.1.148"/>
    </reaction>
</comment>
<comment type="pathway">
    <text evidence="1">Isoprenoid biosynthesis; isopentenyl diphosphate biosynthesis via DXP pathway; isopentenyl diphosphate from 1-deoxy-D-xylulose 5-phosphate: step 3/6.</text>
</comment>
<comment type="similarity">
    <text evidence="1">Belongs to the GHMP kinase family. IspE subfamily.</text>
</comment>
<keyword id="KW-0067">ATP-binding</keyword>
<keyword id="KW-0414">Isoprene biosynthesis</keyword>
<keyword id="KW-0418">Kinase</keyword>
<keyword id="KW-0547">Nucleotide-binding</keyword>
<keyword id="KW-1185">Reference proteome</keyword>
<keyword id="KW-0808">Transferase</keyword>
<gene>
    <name evidence="1" type="primary">ispE</name>
    <name type="ordered locus">CFPG_135</name>
</gene>
<organism>
    <name type="scientific">Azobacteroides pseudotrichonymphae genomovar. CFP2</name>
    <dbReference type="NCBI Taxonomy" id="511995"/>
    <lineage>
        <taxon>Bacteria</taxon>
        <taxon>Pseudomonadati</taxon>
        <taxon>Bacteroidota</taxon>
        <taxon>Bacteroidia</taxon>
        <taxon>Bacteroidales</taxon>
        <taxon>Candidatus Azobacteroides</taxon>
    </lineage>
</organism>
<protein>
    <recommendedName>
        <fullName evidence="1">4-diphosphocytidyl-2-C-methyl-D-erythritol kinase</fullName>
        <shortName evidence="1">CMK</shortName>
        <ecNumber evidence="1">2.7.1.148</ecNumber>
    </recommendedName>
    <alternativeName>
        <fullName evidence="1">4-(cytidine-5'-diphospho)-2-C-methyl-D-erythritol kinase</fullName>
    </alternativeName>
</protein>
<dbReference type="EC" id="2.7.1.148" evidence="1"/>
<dbReference type="EMBL" id="AP010656">
    <property type="protein sequence ID" value="BAG83398.1"/>
    <property type="molecule type" value="Genomic_DNA"/>
</dbReference>
<dbReference type="RefSeq" id="WP_012573159.1">
    <property type="nucleotide sequence ID" value="NC_011565.1"/>
</dbReference>
<dbReference type="SMR" id="B6YQC6"/>
<dbReference type="STRING" id="511995.CFPG_135"/>
<dbReference type="KEGG" id="aps:CFPG_135"/>
<dbReference type="eggNOG" id="COG1947">
    <property type="taxonomic scope" value="Bacteria"/>
</dbReference>
<dbReference type="HOGENOM" id="CLU_053057_1_1_10"/>
<dbReference type="OrthoDB" id="9809438at2"/>
<dbReference type="UniPathway" id="UPA00056">
    <property type="reaction ID" value="UER00094"/>
</dbReference>
<dbReference type="Proteomes" id="UP000000723">
    <property type="component" value="Chromosome"/>
</dbReference>
<dbReference type="GO" id="GO:0050515">
    <property type="term" value="F:4-(cytidine 5'-diphospho)-2-C-methyl-D-erythritol kinase activity"/>
    <property type="evidence" value="ECO:0007669"/>
    <property type="project" value="UniProtKB-UniRule"/>
</dbReference>
<dbReference type="GO" id="GO:0005524">
    <property type="term" value="F:ATP binding"/>
    <property type="evidence" value="ECO:0007669"/>
    <property type="project" value="UniProtKB-UniRule"/>
</dbReference>
<dbReference type="GO" id="GO:0019288">
    <property type="term" value="P:isopentenyl diphosphate biosynthetic process, methylerythritol 4-phosphate pathway"/>
    <property type="evidence" value="ECO:0007669"/>
    <property type="project" value="UniProtKB-UniRule"/>
</dbReference>
<dbReference type="GO" id="GO:0016114">
    <property type="term" value="P:terpenoid biosynthetic process"/>
    <property type="evidence" value="ECO:0007669"/>
    <property type="project" value="InterPro"/>
</dbReference>
<dbReference type="Gene3D" id="3.30.230.10">
    <property type="match status" value="1"/>
</dbReference>
<dbReference type="Gene3D" id="3.30.70.890">
    <property type="entry name" value="GHMP kinase, C-terminal domain"/>
    <property type="match status" value="1"/>
</dbReference>
<dbReference type="HAMAP" id="MF_00061">
    <property type="entry name" value="IspE"/>
    <property type="match status" value="1"/>
</dbReference>
<dbReference type="InterPro" id="IPR013750">
    <property type="entry name" value="GHMP_kinase_C_dom"/>
</dbReference>
<dbReference type="InterPro" id="IPR036554">
    <property type="entry name" value="GHMP_kinase_C_sf"/>
</dbReference>
<dbReference type="InterPro" id="IPR006204">
    <property type="entry name" value="GHMP_kinase_N_dom"/>
</dbReference>
<dbReference type="InterPro" id="IPR004424">
    <property type="entry name" value="IspE"/>
</dbReference>
<dbReference type="InterPro" id="IPR020568">
    <property type="entry name" value="Ribosomal_Su5_D2-typ_SF"/>
</dbReference>
<dbReference type="InterPro" id="IPR014721">
    <property type="entry name" value="Ribsml_uS5_D2-typ_fold_subgr"/>
</dbReference>
<dbReference type="NCBIfam" id="TIGR00154">
    <property type="entry name" value="ispE"/>
    <property type="match status" value="1"/>
</dbReference>
<dbReference type="PANTHER" id="PTHR43527">
    <property type="entry name" value="4-DIPHOSPHOCYTIDYL-2-C-METHYL-D-ERYTHRITOL KINASE, CHLOROPLASTIC"/>
    <property type="match status" value="1"/>
</dbReference>
<dbReference type="PANTHER" id="PTHR43527:SF2">
    <property type="entry name" value="4-DIPHOSPHOCYTIDYL-2-C-METHYL-D-ERYTHRITOL KINASE, CHLOROPLASTIC"/>
    <property type="match status" value="1"/>
</dbReference>
<dbReference type="Pfam" id="PF08544">
    <property type="entry name" value="GHMP_kinases_C"/>
    <property type="match status" value="1"/>
</dbReference>
<dbReference type="Pfam" id="PF00288">
    <property type="entry name" value="GHMP_kinases_N"/>
    <property type="match status" value="1"/>
</dbReference>
<dbReference type="PIRSF" id="PIRSF010376">
    <property type="entry name" value="IspE"/>
    <property type="match status" value="1"/>
</dbReference>
<dbReference type="SUPFAM" id="SSF55060">
    <property type="entry name" value="GHMP Kinase, C-terminal domain"/>
    <property type="match status" value="1"/>
</dbReference>
<dbReference type="SUPFAM" id="SSF54211">
    <property type="entry name" value="Ribosomal protein S5 domain 2-like"/>
    <property type="match status" value="1"/>
</dbReference>
<accession>B6YQC6</accession>
<evidence type="ECO:0000255" key="1">
    <source>
        <dbReference type="HAMAP-Rule" id="MF_00061"/>
    </source>
</evidence>
<reference key="1">
    <citation type="journal article" date="2008" name="Science">
        <title>Genome of an endosymbiont coupling N2 fixation to cellulolysis within RT protist cells in termite gut.</title>
        <authorList>
            <person name="Hongoh Y."/>
            <person name="Sharma V.K."/>
            <person name="Prakash T."/>
            <person name="Noda S."/>
            <person name="Toh H."/>
            <person name="Taylor T.D."/>
            <person name="Kudo T."/>
            <person name="Sakaki Y."/>
            <person name="Toyoda A."/>
            <person name="Hattori M."/>
            <person name="Ohkuma M."/>
        </authorList>
    </citation>
    <scope>NUCLEOTIDE SEQUENCE [LARGE SCALE GENOMIC DNA]</scope>
</reference>
<sequence>MIAFPNAKINLGLHVIARRSDGYHDIETIFCPIDLCDILEIVSATQTKFIQSGIPMDCKVSNNLVMKAYQLLKKHYNLPEITIHLRKNIPIGAGLGGGSSDASFMLYLLSNLANLCLSIEELEAYAKQLGSDCPFFIRNKPVFAKGIGNIFTPIELDLKKYNLALVTTNIHISTSEAYTNIVVSHTPRESLTDIIHYPVDKWKNRLVNDFEEDIFPLYPEIREIKQELYNQGAIYASMSGSGSSVYGLFKKPYRPIGTFNFSIHNFI</sequence>
<name>ISPE_AZOPC</name>
<proteinExistence type="inferred from homology"/>